<sequence>MARILVIFHSITGNTMKLAKAVADGAREGGAEVAVKRVPETIPAEILEKNPGYVKVREELESFEVARPEELQDYDAIIFGSPTRFGVMSSQMKQFIDMTGRLWMERRLEGKVGAVFTSNEMPHGGKEATLLSMLLPLFAHGMIIVGLPPAKELYRAGSYYGAASTGVPKEDDLQVAKMLGKRVAEVAEKLC</sequence>
<name>NQOR_ARCFU</name>
<comment type="function">
    <text evidence="2">It seems to function in response to environmental stress when various electron transfer chains are affected or when the environment is highly oxidizing. It reduces quinones to the hydroquinone state to prevent interaction of the semiquinone with O2 and production of superoxide. It prefers NADH over NADPH.</text>
</comment>
<comment type="catalytic activity">
    <reaction evidence="2">
        <text>a quinone + NADH + H(+) = a quinol + NAD(+)</text>
        <dbReference type="Rhea" id="RHEA:46160"/>
        <dbReference type="ChEBI" id="CHEBI:15378"/>
        <dbReference type="ChEBI" id="CHEBI:24646"/>
        <dbReference type="ChEBI" id="CHEBI:57540"/>
        <dbReference type="ChEBI" id="CHEBI:57945"/>
        <dbReference type="ChEBI" id="CHEBI:132124"/>
        <dbReference type="EC" id="1.6.5.2"/>
    </reaction>
</comment>
<comment type="catalytic activity">
    <reaction evidence="2">
        <text>a quinone + NADPH + H(+) = a quinol + NADP(+)</text>
        <dbReference type="Rhea" id="RHEA:46164"/>
        <dbReference type="ChEBI" id="CHEBI:15378"/>
        <dbReference type="ChEBI" id="CHEBI:24646"/>
        <dbReference type="ChEBI" id="CHEBI:57783"/>
        <dbReference type="ChEBI" id="CHEBI:58349"/>
        <dbReference type="ChEBI" id="CHEBI:132124"/>
        <dbReference type="EC" id="1.6.5.2"/>
    </reaction>
</comment>
<comment type="cofactor">
    <cofactor evidence="2">
        <name>FMN</name>
        <dbReference type="ChEBI" id="CHEBI:58210"/>
    </cofactor>
    <text evidence="2">Binds 1 FMN per monomer.</text>
</comment>
<comment type="biophysicochemical properties">
    <kinetics>
        <KM evidence="2">19 uM for NADH</KM>
        <KM evidence="2">37 uM for benzoquinone</KM>
    </kinetics>
</comment>
<comment type="subunit">
    <text evidence="2">Homodimer and homotetramer; in equilibrium.</text>
</comment>
<comment type="similarity">
    <text evidence="3">Belongs to the WrbA family.</text>
</comment>
<keyword id="KW-0903">Direct protein sequencing</keyword>
<keyword id="KW-0285">Flavoprotein</keyword>
<keyword id="KW-0288">FMN</keyword>
<keyword id="KW-0520">NAD</keyword>
<keyword id="KW-0547">Nucleotide-binding</keyword>
<keyword id="KW-0560">Oxidoreductase</keyword>
<keyword id="KW-1185">Reference proteome</keyword>
<reference key="1">
    <citation type="journal article" date="1997" name="Nature">
        <title>The complete genome sequence of the hyperthermophilic, sulphate-reducing archaeon Archaeoglobus fulgidus.</title>
        <authorList>
            <person name="Klenk H.-P."/>
            <person name="Clayton R.A."/>
            <person name="Tomb J.-F."/>
            <person name="White O."/>
            <person name="Nelson K.E."/>
            <person name="Ketchum K.A."/>
            <person name="Dodson R.J."/>
            <person name="Gwinn M.L."/>
            <person name="Hickey E.K."/>
            <person name="Peterson J.D."/>
            <person name="Richardson D.L."/>
            <person name="Kerlavage A.R."/>
            <person name="Graham D.E."/>
            <person name="Kyrpides N.C."/>
            <person name="Fleischmann R.D."/>
            <person name="Quackenbush J."/>
            <person name="Lee N.H."/>
            <person name="Sutton G.G."/>
            <person name="Gill S.R."/>
            <person name="Kirkness E.F."/>
            <person name="Dougherty B.A."/>
            <person name="McKenney K."/>
            <person name="Adams M.D."/>
            <person name="Loftus B.J."/>
            <person name="Peterson S.N."/>
            <person name="Reich C.I."/>
            <person name="McNeil L.K."/>
            <person name="Badger J.H."/>
            <person name="Glodek A."/>
            <person name="Zhou L."/>
            <person name="Overbeek R."/>
            <person name="Gocayne J.D."/>
            <person name="Weidman J.F."/>
            <person name="McDonald L.A."/>
            <person name="Utterback T.R."/>
            <person name="Cotton M.D."/>
            <person name="Spriggs T."/>
            <person name="Artiach P."/>
            <person name="Kaine B.P."/>
            <person name="Sykes S.M."/>
            <person name="Sadow P.W."/>
            <person name="D'Andrea K.P."/>
            <person name="Bowman C."/>
            <person name="Fujii C."/>
            <person name="Garland S.A."/>
            <person name="Mason T.M."/>
            <person name="Olsen G.J."/>
            <person name="Fraser C.M."/>
            <person name="Smith H.O."/>
            <person name="Woese C.R."/>
            <person name="Venter J.C."/>
        </authorList>
    </citation>
    <scope>NUCLEOTIDE SEQUENCE [LARGE SCALE GENOMIC DNA]</scope>
    <source>
        <strain>ATCC 49558 / DSM 4304 / JCM 9628 / NBRC 100126 / VC-16</strain>
    </source>
</reference>
<reference key="2">
    <citation type="journal article" date="2006" name="J. Bacteriol.">
        <title>WrbA from Escherichia coli and Archaeoglobus fulgidus is an NAD(P)H:quinone oxidoreductase.</title>
        <authorList>
            <person name="Patridge E.V."/>
            <person name="Ferry J.G."/>
        </authorList>
    </citation>
    <scope>PROTEIN SEQUENCE OF 2-6</scope>
    <scope>FUNCTION</scope>
    <scope>CATALYTIC ACTIVITY</scope>
    <scope>BIOPHYSICOCHEMICAL PROPERTIES</scope>
    <scope>COFACTOR</scope>
    <scope>SUBUNIT</scope>
</reference>
<feature type="initiator methionine" description="Removed" evidence="2">
    <location>
        <position position="1"/>
    </location>
</feature>
<feature type="chain" id="PRO_0000422323" description="NAD(P)H dehydrogenase (quinone)">
    <location>
        <begin position="2"/>
        <end position="191"/>
    </location>
</feature>
<feature type="domain" description="Flavodoxin-like">
    <location>
        <begin position="4"/>
        <end position="184"/>
    </location>
</feature>
<feature type="binding site" evidence="1">
    <location>
        <begin position="10"/>
        <end position="15"/>
    </location>
    <ligand>
        <name>FMN</name>
        <dbReference type="ChEBI" id="CHEBI:58210"/>
    </ligand>
</feature>
<feature type="binding site" evidence="1">
    <location>
        <begin position="83"/>
        <end position="85"/>
    </location>
    <ligand>
        <name>FMN</name>
        <dbReference type="ChEBI" id="CHEBI:58210"/>
    </ligand>
</feature>
<feature type="binding site" evidence="1">
    <location>
        <begin position="118"/>
        <end position="124"/>
    </location>
    <ligand>
        <name>FMN</name>
        <dbReference type="ChEBI" id="CHEBI:58210"/>
    </ligand>
</feature>
<evidence type="ECO:0000250" key="1">
    <source>
        <dbReference type="UniProtKB" id="Q9RYU4"/>
    </source>
</evidence>
<evidence type="ECO:0000269" key="2">
    <source>
    </source>
</evidence>
<evidence type="ECO:0000305" key="3"/>
<organism>
    <name type="scientific">Archaeoglobus fulgidus (strain ATCC 49558 / DSM 4304 / JCM 9628 / NBRC 100126 / VC-16)</name>
    <dbReference type="NCBI Taxonomy" id="224325"/>
    <lineage>
        <taxon>Archaea</taxon>
        <taxon>Methanobacteriati</taxon>
        <taxon>Methanobacteriota</taxon>
        <taxon>Archaeoglobi</taxon>
        <taxon>Archaeoglobales</taxon>
        <taxon>Archaeoglobaceae</taxon>
        <taxon>Archaeoglobus</taxon>
    </lineage>
</organism>
<gene>
    <name type="ordered locus">AF_0343</name>
</gene>
<dbReference type="EC" id="1.6.5.2" evidence="2"/>
<dbReference type="EMBL" id="AE000782">
    <property type="protein sequence ID" value="AAB90893.1"/>
    <property type="molecule type" value="Genomic_DNA"/>
</dbReference>
<dbReference type="PIR" id="G69292">
    <property type="entry name" value="G69292"/>
</dbReference>
<dbReference type="SMR" id="O29904"/>
<dbReference type="STRING" id="224325.AF_0343"/>
<dbReference type="PaxDb" id="224325-AF_0343"/>
<dbReference type="DNASU" id="1483557"/>
<dbReference type="EnsemblBacteria" id="AAB90893">
    <property type="protein sequence ID" value="AAB90893"/>
    <property type="gene ID" value="AF_0343"/>
</dbReference>
<dbReference type="KEGG" id="afu:AF_0343"/>
<dbReference type="eggNOG" id="arCOG00510">
    <property type="taxonomic scope" value="Archaea"/>
</dbReference>
<dbReference type="HOGENOM" id="CLU_051402_0_2_2"/>
<dbReference type="OrthoDB" id="9059at2157"/>
<dbReference type="PhylomeDB" id="O29904"/>
<dbReference type="BRENDA" id="1.6.5.2">
    <property type="organism ID" value="414"/>
</dbReference>
<dbReference type="SABIO-RK" id="O29904"/>
<dbReference type="Proteomes" id="UP000002199">
    <property type="component" value="Chromosome"/>
</dbReference>
<dbReference type="GO" id="GO:0016020">
    <property type="term" value="C:membrane"/>
    <property type="evidence" value="ECO:0007669"/>
    <property type="project" value="TreeGrafter"/>
</dbReference>
<dbReference type="GO" id="GO:0009055">
    <property type="term" value="F:electron transfer activity"/>
    <property type="evidence" value="ECO:0007669"/>
    <property type="project" value="InterPro"/>
</dbReference>
<dbReference type="GO" id="GO:0010181">
    <property type="term" value="F:FMN binding"/>
    <property type="evidence" value="ECO:0007669"/>
    <property type="project" value="InterPro"/>
</dbReference>
<dbReference type="GO" id="GO:0050136">
    <property type="term" value="F:NADH:ubiquinone reductase (non-electrogenic) activity"/>
    <property type="evidence" value="ECO:0007669"/>
    <property type="project" value="RHEA"/>
</dbReference>
<dbReference type="GO" id="GO:0008753">
    <property type="term" value="F:NADPH dehydrogenase (quinone) activity"/>
    <property type="evidence" value="ECO:0007669"/>
    <property type="project" value="RHEA"/>
</dbReference>
<dbReference type="FunFam" id="3.40.50.360:FF:000001">
    <property type="entry name" value="NAD(P)H dehydrogenase (Quinone) FQR1-like"/>
    <property type="match status" value="1"/>
</dbReference>
<dbReference type="Gene3D" id="3.40.50.360">
    <property type="match status" value="1"/>
</dbReference>
<dbReference type="InterPro" id="IPR008254">
    <property type="entry name" value="Flavodoxin/NO_synth"/>
</dbReference>
<dbReference type="InterPro" id="IPR001226">
    <property type="entry name" value="Flavodoxin_CS"/>
</dbReference>
<dbReference type="InterPro" id="IPR029039">
    <property type="entry name" value="Flavoprotein-like_sf"/>
</dbReference>
<dbReference type="InterPro" id="IPR010089">
    <property type="entry name" value="Flavoprotein_WrbA-like"/>
</dbReference>
<dbReference type="NCBIfam" id="TIGR01755">
    <property type="entry name" value="flav_wrbA"/>
    <property type="match status" value="1"/>
</dbReference>
<dbReference type="NCBIfam" id="NF002999">
    <property type="entry name" value="PRK03767.1"/>
    <property type="match status" value="1"/>
</dbReference>
<dbReference type="PANTHER" id="PTHR30546">
    <property type="entry name" value="FLAVODOXIN-RELATED PROTEIN WRBA-RELATED"/>
    <property type="match status" value="1"/>
</dbReference>
<dbReference type="PANTHER" id="PTHR30546:SF23">
    <property type="entry name" value="FLAVOPROTEIN-LIKE PROTEIN YCP4-RELATED"/>
    <property type="match status" value="1"/>
</dbReference>
<dbReference type="Pfam" id="PF00258">
    <property type="entry name" value="Flavodoxin_1"/>
    <property type="match status" value="1"/>
</dbReference>
<dbReference type="SUPFAM" id="SSF52218">
    <property type="entry name" value="Flavoproteins"/>
    <property type="match status" value="1"/>
</dbReference>
<dbReference type="PROSITE" id="PS00201">
    <property type="entry name" value="FLAVODOXIN"/>
    <property type="match status" value="1"/>
</dbReference>
<dbReference type="PROSITE" id="PS50902">
    <property type="entry name" value="FLAVODOXIN_LIKE"/>
    <property type="match status" value="1"/>
</dbReference>
<accession>O29904</accession>
<proteinExistence type="evidence at protein level"/>
<protein>
    <recommendedName>
        <fullName>NAD(P)H dehydrogenase (quinone)</fullName>
        <ecNumber evidence="2">1.6.5.2</ecNumber>
    </recommendedName>
    <alternativeName>
        <fullName>Flavoprotein WrbA</fullName>
    </alternativeName>
    <alternativeName>
        <fullName>NAD(P)H:quinone oxidoreductase</fullName>
        <shortName>NQO</shortName>
    </alternativeName>
</protein>